<sequence>MRYIKSMTQQKLSFLLALYIGLFMNCAVFYRRFGSYAQEFTIWKGLSAVVELGATVLVTFFLLRLLSLFGRRVWRVLATLVVLFSAGASYYMTFLNVVIGYGIIASVMTTDIDLSKEVVGLHFVLWLIAVSVLPLIFIWSNHCRYTLLRQLRTPGQRFRSAAVVVLAGVMVWAPIRLLDIQQKKVERATGIDLPSYGGVVANSYLPSNWLSALGLYAWAQVDESSDNNSLINPARKFTYVAPKDGDDTYVVFIIGETTRWDHMGIFGYERNTTPKLAQEKNLAAFRGYSCDTATKLSLRCMFVREGGADNNPQRTLKEQNVFAVLKQLGFSSDLYAMQSEMWFYSNTMADNISYREQIGAEPRNRGKTVDDMLLIDEMQNSLAQNPEGKHLIILHTKGSHFNYTQRYPRSYAQWKPECIGVDSGCTKAQMINSYDNSVTYVDHFITSVFDQLRDKKAIVFYAADHGESINEREHLHGTPRNMAPPEQFRVPMLVWMSDKYLASPQHAQMFAHLKQQAEIKVPRRHVELYDTIMGCLGYTSPNGGINQNNNWCHIPDVQKVAAK</sequence>
<protein>
    <recommendedName>
        <fullName>Kdo(2)-lipid A phosphoethanolamine 7''-transferase</fullName>
        <ecNumber evidence="2">2.7.8.42</ecNumber>
    </recommendedName>
    <alternativeName>
        <fullName>Phosphoethanolamine transferase EptB</fullName>
    </alternativeName>
</protein>
<accession>P43666</accession>
<proteinExistence type="inferred from homology"/>
<keyword id="KW-0997">Cell inner membrane</keyword>
<keyword id="KW-1003">Cell membrane</keyword>
<keyword id="KW-0441">Lipid A biosynthesis</keyword>
<keyword id="KW-0444">Lipid biosynthesis</keyword>
<keyword id="KW-0443">Lipid metabolism</keyword>
<keyword id="KW-0448">Lipopolysaccharide biosynthesis</keyword>
<keyword id="KW-0472">Membrane</keyword>
<keyword id="KW-1185">Reference proteome</keyword>
<keyword id="KW-0808">Transferase</keyword>
<keyword id="KW-0812">Transmembrane</keyword>
<keyword id="KW-1133">Transmembrane helix</keyword>
<reference key="1">
    <citation type="journal article" date="2001" name="Nature">
        <title>Complete genome sequence of Salmonella enterica serovar Typhimurium LT2.</title>
        <authorList>
            <person name="McClelland M."/>
            <person name="Sanderson K.E."/>
            <person name="Spieth J."/>
            <person name="Clifton S.W."/>
            <person name="Latreille P."/>
            <person name="Courtney L."/>
            <person name="Porwollik S."/>
            <person name="Ali J."/>
            <person name="Dante M."/>
            <person name="Du F."/>
            <person name="Hou S."/>
            <person name="Layman D."/>
            <person name="Leonard S."/>
            <person name="Nguyen C."/>
            <person name="Scott K."/>
            <person name="Holmes A."/>
            <person name="Grewal N."/>
            <person name="Mulvaney E."/>
            <person name="Ryan E."/>
            <person name="Sun H."/>
            <person name="Florea L."/>
            <person name="Miller W."/>
            <person name="Stoneking T."/>
            <person name="Nhan M."/>
            <person name="Waterston R."/>
            <person name="Wilson R.K."/>
        </authorList>
    </citation>
    <scope>NUCLEOTIDE SEQUENCE [LARGE SCALE GENOMIC DNA]</scope>
    <source>
        <strain>LT2 / SGSC1412 / ATCC 700720</strain>
    </source>
</reference>
<reference key="2">
    <citation type="journal article" date="1995" name="J. Bacteriol.">
        <title>Identification and sequence analysis of lpfABCDE, a putative fimbrial operon of Salmonella typhimurium.</title>
        <authorList>
            <person name="Baeumler A.J."/>
            <person name="Heffron F."/>
        </authorList>
    </citation>
    <scope>NUCLEOTIDE SEQUENCE [GENOMIC DNA] OF 1-295</scope>
    <source>
        <strain>ATCC 14028 / SGSG 2980 / CDC 6516-60 / NCTC 12023</strain>
    </source>
</reference>
<gene>
    <name type="primary">eptB</name>
    <name type="ordered locus">STM3635</name>
</gene>
<feature type="chain" id="PRO_0000209149" description="Kdo(2)-lipid A phosphoethanolamine 7''-transferase">
    <location>
        <begin position="1"/>
        <end position="563"/>
    </location>
</feature>
<feature type="topological domain" description="Cytoplasmic" evidence="3">
    <location>
        <begin position="1"/>
        <end position="9"/>
    </location>
</feature>
<feature type="transmembrane region" description="Helical" evidence="3">
    <location>
        <begin position="10"/>
        <end position="30"/>
    </location>
</feature>
<feature type="topological domain" description="Periplasmic" evidence="3">
    <location>
        <begin position="31"/>
        <end position="48"/>
    </location>
</feature>
<feature type="transmembrane region" description="Helical" evidence="3">
    <location>
        <begin position="49"/>
        <end position="69"/>
    </location>
</feature>
<feature type="topological domain" description="Cytoplasmic" evidence="3">
    <location>
        <begin position="70"/>
        <end position="79"/>
    </location>
</feature>
<feature type="transmembrane region" description="Helical" evidence="3">
    <location>
        <begin position="80"/>
        <end position="100"/>
    </location>
</feature>
<feature type="topological domain" description="Periplasmic" evidence="3">
    <location>
        <begin position="101"/>
        <end position="117"/>
    </location>
</feature>
<feature type="transmembrane region" description="Helical" evidence="3">
    <location>
        <begin position="118"/>
        <end position="138"/>
    </location>
</feature>
<feature type="topological domain" description="Cytoplasmic" evidence="3">
    <location>
        <begin position="139"/>
        <end position="159"/>
    </location>
</feature>
<feature type="transmembrane region" description="Helical" evidence="3">
    <location>
        <begin position="160"/>
        <end position="180"/>
    </location>
</feature>
<feature type="topological domain" description="Periplasmic" evidence="3">
    <location>
        <begin position="181"/>
        <end position="563"/>
    </location>
</feature>
<comment type="function">
    <text evidence="2">Catalyzes the addition of a phosphoethanolamine (pEtN) moiety to the outer 3-deoxy-D-manno-octulosonic acid (Kdo) residue of a Kdo(2)-lipid A. Phosphatidylethanolamines with one unsaturated acyl group function as pEtN donors and the reaction releases diacylglycerol.</text>
</comment>
<comment type="catalytic activity">
    <reaction evidence="2">
        <text>alpha-Kdo-(2-&gt;4)-alpha-Kdo-(2-&gt;6)-lipid A (E. coli) + a 1,2-diacyl-sn-glycero-3-phosphoethanolamine = 7-O-[2-aminoethoxy(hydroxy)phosphoryl]-alpha-Kdo-(2-&gt;4)-alpha-Kdo-(2-&gt;6)-lipid A + a 1,2-diacyl-sn-glycerol</text>
        <dbReference type="Rhea" id="RHEA:24698"/>
        <dbReference type="ChEBI" id="CHEBI:17815"/>
        <dbReference type="ChEBI" id="CHEBI:58540"/>
        <dbReference type="ChEBI" id="CHEBI:60085"/>
        <dbReference type="ChEBI" id="CHEBI:64612"/>
        <dbReference type="EC" id="2.7.8.42"/>
    </reaction>
</comment>
<comment type="catalytic activity">
    <reaction evidence="2">
        <text>alpha-Kdo-(2-&gt;4)-alpha-Kdo-(2-&gt;6)-lipid IVA (E. coli) + a 1,2-diacyl-sn-glycero-3-phosphoethanolamine = 7-O-[2-aminoethoxy(hydroxy)phosphoryl]-alpha-Kdo-(2-&gt;4)-alpha-Kdo-(2-&gt;6)-lipid IVA (E. coli) + a 1,2-diacyl-sn-glycerol</text>
        <dbReference type="Rhea" id="RHEA:46908"/>
        <dbReference type="ChEBI" id="CHEBI:17815"/>
        <dbReference type="ChEBI" id="CHEBI:60365"/>
        <dbReference type="ChEBI" id="CHEBI:64612"/>
        <dbReference type="ChEBI" id="CHEBI:87107"/>
        <dbReference type="EC" id="2.7.8.42"/>
    </reaction>
</comment>
<comment type="cofactor">
    <cofactor evidence="1">
        <name>Ca(2+)</name>
        <dbReference type="ChEBI" id="CHEBI:29108"/>
    </cofactor>
</comment>
<comment type="subcellular location">
    <subcellularLocation>
        <location evidence="1">Cell inner membrane</location>
        <topology evidence="1">Multi-pass membrane protein</topology>
    </subcellularLocation>
</comment>
<comment type="similarity">
    <text evidence="4">Belongs to the phosphoethanolamine transferase family. EptB subfamily.</text>
</comment>
<comment type="sequence caution" evidence="4">
    <conflict type="erroneous initiation">
        <sequence resource="EMBL-CDS" id="AAA73971"/>
    </conflict>
</comment>
<dbReference type="EC" id="2.7.8.42" evidence="2"/>
<dbReference type="EMBL" id="AE006468">
    <property type="protein sequence ID" value="AAL22495.1"/>
    <property type="molecule type" value="Genomic_DNA"/>
</dbReference>
<dbReference type="EMBL" id="U18559">
    <property type="protein sequence ID" value="AAA73971.1"/>
    <property type="status" value="ALT_INIT"/>
    <property type="molecule type" value="Genomic_DNA"/>
</dbReference>
<dbReference type="PIR" id="F56271">
    <property type="entry name" value="F56271"/>
</dbReference>
<dbReference type="RefSeq" id="WP_001269259.1">
    <property type="nucleotide sequence ID" value="NC_003197.2"/>
</dbReference>
<dbReference type="SMR" id="P43666"/>
<dbReference type="STRING" id="99287.STM3635"/>
<dbReference type="PaxDb" id="99287-STM3635"/>
<dbReference type="KEGG" id="stm:STM3635"/>
<dbReference type="PATRIC" id="fig|99287.12.peg.3844"/>
<dbReference type="HOGENOM" id="CLU_018534_1_1_6"/>
<dbReference type="OMA" id="FAMQSEV"/>
<dbReference type="PhylomeDB" id="P43666"/>
<dbReference type="BioCyc" id="SENT99287:STM3635-MONOMER"/>
<dbReference type="Proteomes" id="UP000001014">
    <property type="component" value="Chromosome"/>
</dbReference>
<dbReference type="GO" id="GO:0005886">
    <property type="term" value="C:plasma membrane"/>
    <property type="evidence" value="ECO:0000318"/>
    <property type="project" value="GO_Central"/>
</dbReference>
<dbReference type="GO" id="GO:0043838">
    <property type="term" value="F:phosphatidylethanolamine:Kdo2-lipid A phosphoethanolamine transferase activity"/>
    <property type="evidence" value="ECO:0000318"/>
    <property type="project" value="GO_Central"/>
</dbReference>
<dbReference type="GO" id="GO:0009245">
    <property type="term" value="P:lipid A biosynthetic process"/>
    <property type="evidence" value="ECO:0000318"/>
    <property type="project" value="GO_Central"/>
</dbReference>
<dbReference type="GO" id="GO:0009244">
    <property type="term" value="P:lipopolysaccharide core region biosynthetic process"/>
    <property type="evidence" value="ECO:0000318"/>
    <property type="project" value="GO_Central"/>
</dbReference>
<dbReference type="CDD" id="cd16017">
    <property type="entry name" value="LptA"/>
    <property type="match status" value="1"/>
</dbReference>
<dbReference type="FunFam" id="3.40.720.10:FF:000030">
    <property type="entry name" value="Phosphoethanolamine transferase eptB"/>
    <property type="match status" value="1"/>
</dbReference>
<dbReference type="Gene3D" id="3.40.720.10">
    <property type="entry name" value="Alkaline Phosphatase, subunit A"/>
    <property type="match status" value="1"/>
</dbReference>
<dbReference type="InterPro" id="IPR017850">
    <property type="entry name" value="Alkaline_phosphatase_core_sf"/>
</dbReference>
<dbReference type="InterPro" id="IPR012549">
    <property type="entry name" value="EptA-like_N"/>
</dbReference>
<dbReference type="InterPro" id="IPR040423">
    <property type="entry name" value="PEA_transferase"/>
</dbReference>
<dbReference type="InterPro" id="IPR000917">
    <property type="entry name" value="Sulfatase_N"/>
</dbReference>
<dbReference type="NCBIfam" id="NF008593">
    <property type="entry name" value="PRK11560.1"/>
    <property type="match status" value="1"/>
</dbReference>
<dbReference type="PANTHER" id="PTHR30443">
    <property type="entry name" value="INNER MEMBRANE PROTEIN"/>
    <property type="match status" value="1"/>
</dbReference>
<dbReference type="PANTHER" id="PTHR30443:SF3">
    <property type="entry name" value="KDO(2)-LIPID A PHOSPHOETHANOLAMINE 7''-TRANSFERASE"/>
    <property type="match status" value="1"/>
</dbReference>
<dbReference type="Pfam" id="PF08019">
    <property type="entry name" value="EptA_B_N"/>
    <property type="match status" value="1"/>
</dbReference>
<dbReference type="Pfam" id="PF00884">
    <property type="entry name" value="Sulfatase"/>
    <property type="match status" value="1"/>
</dbReference>
<dbReference type="SUPFAM" id="SSF53649">
    <property type="entry name" value="Alkaline phosphatase-like"/>
    <property type="match status" value="1"/>
</dbReference>
<evidence type="ECO:0000250" key="1"/>
<evidence type="ECO:0000250" key="2">
    <source>
        <dbReference type="UniProtKB" id="P37661"/>
    </source>
</evidence>
<evidence type="ECO:0000255" key="3"/>
<evidence type="ECO:0000305" key="4"/>
<organism>
    <name type="scientific">Salmonella typhimurium (strain LT2 / SGSC1412 / ATCC 700720)</name>
    <dbReference type="NCBI Taxonomy" id="99287"/>
    <lineage>
        <taxon>Bacteria</taxon>
        <taxon>Pseudomonadati</taxon>
        <taxon>Pseudomonadota</taxon>
        <taxon>Gammaproteobacteria</taxon>
        <taxon>Enterobacterales</taxon>
        <taxon>Enterobacteriaceae</taxon>
        <taxon>Salmonella</taxon>
    </lineage>
</organism>
<name>EPTB_SALTY</name>